<feature type="chain" id="PRO_1000087259" description="Large ribosomal subunit protein uL30">
    <location>
        <begin position="1"/>
        <end position="58"/>
    </location>
</feature>
<name>RL30_PSEPG</name>
<keyword id="KW-0687">Ribonucleoprotein</keyword>
<keyword id="KW-0689">Ribosomal protein</keyword>
<evidence type="ECO:0000255" key="1">
    <source>
        <dbReference type="HAMAP-Rule" id="MF_01371"/>
    </source>
</evidence>
<evidence type="ECO:0000305" key="2"/>
<accession>B0KK85</accession>
<protein>
    <recommendedName>
        <fullName evidence="1">Large ribosomal subunit protein uL30</fullName>
    </recommendedName>
    <alternativeName>
        <fullName evidence="2">50S ribosomal protein L30</fullName>
    </alternativeName>
</protein>
<sequence>MATVKVTLIKSVSGRLPNHKLCVKGLGLRRIGHTVEVQDTPENRGMINKAYYMLKVEG</sequence>
<reference key="1">
    <citation type="submission" date="2008-01" db="EMBL/GenBank/DDBJ databases">
        <title>Complete sequence of Pseudomonas putida GB-1.</title>
        <authorList>
            <consortium name="US DOE Joint Genome Institute"/>
            <person name="Copeland A."/>
            <person name="Lucas S."/>
            <person name="Lapidus A."/>
            <person name="Barry K."/>
            <person name="Glavina del Rio T."/>
            <person name="Dalin E."/>
            <person name="Tice H."/>
            <person name="Pitluck S."/>
            <person name="Bruce D."/>
            <person name="Goodwin L."/>
            <person name="Chertkov O."/>
            <person name="Brettin T."/>
            <person name="Detter J.C."/>
            <person name="Han C."/>
            <person name="Kuske C.R."/>
            <person name="Schmutz J."/>
            <person name="Larimer F."/>
            <person name="Land M."/>
            <person name="Hauser L."/>
            <person name="Kyrpides N."/>
            <person name="Kim E."/>
            <person name="McCarthy J.K."/>
            <person name="Richardson P."/>
        </authorList>
    </citation>
    <scope>NUCLEOTIDE SEQUENCE [LARGE SCALE GENOMIC DNA]</scope>
    <source>
        <strain>GB-1</strain>
    </source>
</reference>
<dbReference type="EMBL" id="CP000926">
    <property type="protein sequence ID" value="ABY96413.1"/>
    <property type="molecule type" value="Genomic_DNA"/>
</dbReference>
<dbReference type="RefSeq" id="WP_003255463.1">
    <property type="nucleotide sequence ID" value="NC_010322.1"/>
</dbReference>
<dbReference type="SMR" id="B0KK85"/>
<dbReference type="GeneID" id="97165997"/>
<dbReference type="KEGG" id="ppg:PputGB1_0502"/>
<dbReference type="eggNOG" id="COG1841">
    <property type="taxonomic scope" value="Bacteria"/>
</dbReference>
<dbReference type="HOGENOM" id="CLU_131047_1_4_6"/>
<dbReference type="Proteomes" id="UP000002157">
    <property type="component" value="Chromosome"/>
</dbReference>
<dbReference type="GO" id="GO:0022625">
    <property type="term" value="C:cytosolic large ribosomal subunit"/>
    <property type="evidence" value="ECO:0007669"/>
    <property type="project" value="TreeGrafter"/>
</dbReference>
<dbReference type="GO" id="GO:0003735">
    <property type="term" value="F:structural constituent of ribosome"/>
    <property type="evidence" value="ECO:0007669"/>
    <property type="project" value="InterPro"/>
</dbReference>
<dbReference type="GO" id="GO:0006412">
    <property type="term" value="P:translation"/>
    <property type="evidence" value="ECO:0007669"/>
    <property type="project" value="UniProtKB-UniRule"/>
</dbReference>
<dbReference type="CDD" id="cd01658">
    <property type="entry name" value="Ribosomal_L30"/>
    <property type="match status" value="1"/>
</dbReference>
<dbReference type="FunFam" id="3.30.1390.20:FF:000001">
    <property type="entry name" value="50S ribosomal protein L30"/>
    <property type="match status" value="1"/>
</dbReference>
<dbReference type="Gene3D" id="3.30.1390.20">
    <property type="entry name" value="Ribosomal protein L30, ferredoxin-like fold domain"/>
    <property type="match status" value="1"/>
</dbReference>
<dbReference type="HAMAP" id="MF_01371_B">
    <property type="entry name" value="Ribosomal_uL30_B"/>
    <property type="match status" value="1"/>
</dbReference>
<dbReference type="InterPro" id="IPR036919">
    <property type="entry name" value="Ribo_uL30_ferredoxin-like_sf"/>
</dbReference>
<dbReference type="InterPro" id="IPR005996">
    <property type="entry name" value="Ribosomal_uL30_bac-type"/>
</dbReference>
<dbReference type="InterPro" id="IPR016082">
    <property type="entry name" value="Ribosomal_uL30_ferredoxin-like"/>
</dbReference>
<dbReference type="NCBIfam" id="TIGR01308">
    <property type="entry name" value="rpmD_bact"/>
    <property type="match status" value="1"/>
</dbReference>
<dbReference type="PANTHER" id="PTHR15892:SF2">
    <property type="entry name" value="LARGE RIBOSOMAL SUBUNIT PROTEIN UL30M"/>
    <property type="match status" value="1"/>
</dbReference>
<dbReference type="PANTHER" id="PTHR15892">
    <property type="entry name" value="MITOCHONDRIAL RIBOSOMAL PROTEIN L30"/>
    <property type="match status" value="1"/>
</dbReference>
<dbReference type="Pfam" id="PF00327">
    <property type="entry name" value="Ribosomal_L30"/>
    <property type="match status" value="1"/>
</dbReference>
<dbReference type="PIRSF" id="PIRSF002211">
    <property type="entry name" value="Ribosomal_L30_bac-type"/>
    <property type="match status" value="1"/>
</dbReference>
<dbReference type="SUPFAM" id="SSF55129">
    <property type="entry name" value="Ribosomal protein L30p/L7e"/>
    <property type="match status" value="1"/>
</dbReference>
<gene>
    <name evidence="1" type="primary">rpmD</name>
    <name type="ordered locus">PputGB1_0502</name>
</gene>
<organism>
    <name type="scientific">Pseudomonas putida (strain GB-1)</name>
    <dbReference type="NCBI Taxonomy" id="76869"/>
    <lineage>
        <taxon>Bacteria</taxon>
        <taxon>Pseudomonadati</taxon>
        <taxon>Pseudomonadota</taxon>
        <taxon>Gammaproteobacteria</taxon>
        <taxon>Pseudomonadales</taxon>
        <taxon>Pseudomonadaceae</taxon>
        <taxon>Pseudomonas</taxon>
    </lineage>
</organism>
<comment type="subunit">
    <text evidence="1">Part of the 50S ribosomal subunit.</text>
</comment>
<comment type="similarity">
    <text evidence="1">Belongs to the universal ribosomal protein uL30 family.</text>
</comment>
<proteinExistence type="inferred from homology"/>